<feature type="chain" id="PRO_0000034807" description="DNA gyrase subunit A, 1st part" evidence="1">
    <location>
        <begin position="1"/>
        <end position="130"/>
    </location>
</feature>
<feature type="chain" id="PRO_0000034808" description="Mle GyrA intein" evidence="1">
    <location>
        <begin position="131"/>
        <end position="550"/>
    </location>
</feature>
<feature type="chain" id="PRO_0000034809" description="DNA gyrase subunit A, 2nd part" evidence="1">
    <location>
        <begin position="551"/>
        <end position="1273"/>
    </location>
</feature>
<feature type="domain" description="Topo IIA-type catalytic" evidence="4">
    <location>
        <begin position="42"/>
        <end position="931"/>
    </location>
</feature>
<feature type="domain" description="DOD-type homing endonuclease" evidence="3">
    <location>
        <begin position="256"/>
        <end position="396"/>
    </location>
</feature>
<feature type="short sequence motif" description="GyrA-box" evidence="2">
    <location>
        <begin position="958"/>
        <end position="964"/>
    </location>
</feature>
<feature type="active site" description="O-(5'-phospho-DNA)-tyrosine intermediate" evidence="2">
    <location>
        <position position="130"/>
    </location>
</feature>
<feature type="sequence conflict" description="In Ref. 1; CAA94713/CAA92430." evidence="6" ref="1">
    <original>F</original>
    <variation>S</variation>
    <location>
        <position position="267"/>
    </location>
</feature>
<reference key="1">
    <citation type="journal article" date="1996" name="Proc. Natl. Acad. Sci. U.S.A.">
        <title>Homing events in the gyrA gene of some mycobacteria.</title>
        <authorList>
            <person name="Fsihi H."/>
            <person name="Vincent V."/>
            <person name="Cole S.T."/>
        </authorList>
    </citation>
    <scope>NUCLEOTIDE SEQUENCE [GENOMIC DNA]</scope>
</reference>
<reference key="2">
    <citation type="journal article" date="2001" name="Nature">
        <title>Massive gene decay in the leprosy bacillus.</title>
        <authorList>
            <person name="Cole S.T."/>
            <person name="Eiglmeier K."/>
            <person name="Parkhill J."/>
            <person name="James K.D."/>
            <person name="Thomson N.R."/>
            <person name="Wheeler P.R."/>
            <person name="Honore N."/>
            <person name="Garnier T."/>
            <person name="Churcher C.M."/>
            <person name="Harris D.E."/>
            <person name="Mungall K.L."/>
            <person name="Basham D."/>
            <person name="Brown D."/>
            <person name="Chillingworth T."/>
            <person name="Connor R."/>
            <person name="Davies R.M."/>
            <person name="Devlin K."/>
            <person name="Duthoy S."/>
            <person name="Feltwell T."/>
            <person name="Fraser A."/>
            <person name="Hamlin N."/>
            <person name="Holroyd S."/>
            <person name="Hornsby T."/>
            <person name="Jagels K."/>
            <person name="Lacroix C."/>
            <person name="Maclean J."/>
            <person name="Moule S."/>
            <person name="Murphy L.D."/>
            <person name="Oliver K."/>
            <person name="Quail M.A."/>
            <person name="Rajandream M.A."/>
            <person name="Rutherford K.M."/>
            <person name="Rutter S."/>
            <person name="Seeger K."/>
            <person name="Simon S."/>
            <person name="Simmonds M."/>
            <person name="Skelton J."/>
            <person name="Squares R."/>
            <person name="Squares S."/>
            <person name="Stevens K."/>
            <person name="Taylor K."/>
            <person name="Whitehead S."/>
            <person name="Woodward J.R."/>
            <person name="Barrell B.G."/>
        </authorList>
    </citation>
    <scope>NUCLEOTIDE SEQUENCE [LARGE SCALE GENOMIC DNA]</scope>
    <source>
        <strain>TN</strain>
    </source>
</reference>
<reference key="3">
    <citation type="journal article" date="1995" name="Antimicrob. Agents Chemother.">
        <title>Sequences of conserved region in the A subunit of DNA gyrase from nine species of the genus Mycobacterium: phylogenetic analysis and implication for intrinsic susceptibility to quinolones.</title>
        <authorList>
            <person name="Guillemin I."/>
            <person name="Cambau E."/>
            <person name="Jarlier V."/>
        </authorList>
    </citation>
    <scope>NUCLEOTIDE SEQUENCE [GENOMIC DNA] OF 75-114</scope>
</reference>
<reference key="4">
    <citation type="journal article" date="2007" name="Antimicrob. Agents Chemother.">
        <title>Expression and purification of an active form of the Mycobacterium leprae DNA gyrase and its inhibition by quinolones.</title>
        <authorList>
            <person name="Matrat S."/>
            <person name="Petrella S."/>
            <person name="Cambau E."/>
            <person name="Sougakoff W."/>
            <person name="Jarlier V."/>
            <person name="Aubry A."/>
        </authorList>
    </citation>
    <scope>FUNCTION</scope>
    <scope>ACTIVITY REGULATION</scope>
    <scope>SUBUNIT</scope>
</reference>
<organism>
    <name type="scientific">Mycobacterium leprae (strain TN)</name>
    <dbReference type="NCBI Taxonomy" id="272631"/>
    <lineage>
        <taxon>Bacteria</taxon>
        <taxon>Bacillati</taxon>
        <taxon>Actinomycetota</taxon>
        <taxon>Actinomycetes</taxon>
        <taxon>Mycobacteriales</taxon>
        <taxon>Mycobacteriaceae</taxon>
        <taxon>Mycobacterium</taxon>
    </lineage>
</organism>
<name>GYRA_MYCLE</name>
<evidence type="ECO:0000250" key="1"/>
<evidence type="ECO:0000255" key="2">
    <source>
        <dbReference type="HAMAP-Rule" id="MF_01897"/>
    </source>
</evidence>
<evidence type="ECO:0000255" key="3">
    <source>
        <dbReference type="PROSITE-ProRule" id="PRU00273"/>
    </source>
</evidence>
<evidence type="ECO:0000255" key="4">
    <source>
        <dbReference type="PROSITE-ProRule" id="PRU01384"/>
    </source>
</evidence>
<evidence type="ECO:0000269" key="5">
    <source>
    </source>
</evidence>
<evidence type="ECO:0000305" key="6"/>
<dbReference type="EC" id="5.6.2.2" evidence="2"/>
<dbReference type="EMBL" id="Z70722">
    <property type="protein sequence ID" value="CAA94713.1"/>
    <property type="molecule type" value="Genomic_DNA"/>
</dbReference>
<dbReference type="EMBL" id="Z68206">
    <property type="protein sequence ID" value="CAA92430.1"/>
    <property type="molecule type" value="Genomic_DNA"/>
</dbReference>
<dbReference type="EMBL" id="AL583917">
    <property type="protein sequence ID" value="CAC29514.1"/>
    <property type="status" value="ALT_FRAME"/>
    <property type="molecule type" value="Genomic_DNA"/>
</dbReference>
<dbReference type="EMBL" id="X87124">
    <property type="protein sequence ID" value="CAA60608.1"/>
    <property type="molecule type" value="Genomic_DNA"/>
</dbReference>
<dbReference type="PIR" id="F86909">
    <property type="entry name" value="F86909"/>
</dbReference>
<dbReference type="PIR" id="T10006">
    <property type="entry name" value="T10006"/>
</dbReference>
<dbReference type="RefSeq" id="WP_010907459.1">
    <property type="nucleotide sequence ID" value="NC_002677.1"/>
</dbReference>
<dbReference type="SMR" id="Q57532"/>
<dbReference type="STRING" id="272631.gene:17573815"/>
<dbReference type="MEROPS" id="N10.001"/>
<dbReference type="KEGG" id="mle:ML0006"/>
<dbReference type="Leproma" id="ML0006"/>
<dbReference type="eggNOG" id="COG0188">
    <property type="taxonomic scope" value="Bacteria"/>
</dbReference>
<dbReference type="eggNOG" id="COG1372">
    <property type="taxonomic scope" value="Bacteria"/>
</dbReference>
<dbReference type="HOGENOM" id="CLU_002977_10_0_11"/>
<dbReference type="Proteomes" id="UP000000806">
    <property type="component" value="Chromosome"/>
</dbReference>
<dbReference type="GO" id="GO:0005737">
    <property type="term" value="C:cytoplasm"/>
    <property type="evidence" value="ECO:0007669"/>
    <property type="project" value="UniProtKB-SubCell"/>
</dbReference>
<dbReference type="GO" id="GO:0009330">
    <property type="term" value="C:DNA topoisomerase type II (double strand cut, ATP-hydrolyzing) complex"/>
    <property type="evidence" value="ECO:0007669"/>
    <property type="project" value="TreeGrafter"/>
</dbReference>
<dbReference type="GO" id="GO:0005524">
    <property type="term" value="F:ATP binding"/>
    <property type="evidence" value="ECO:0007669"/>
    <property type="project" value="UniProtKB-KW"/>
</dbReference>
<dbReference type="GO" id="GO:0003677">
    <property type="term" value="F:DNA binding"/>
    <property type="evidence" value="ECO:0007669"/>
    <property type="project" value="UniProtKB-KW"/>
</dbReference>
<dbReference type="GO" id="GO:0034335">
    <property type="term" value="F:DNA negative supercoiling activity"/>
    <property type="evidence" value="ECO:0000314"/>
    <property type="project" value="UniProtKB"/>
</dbReference>
<dbReference type="GO" id="GO:0004519">
    <property type="term" value="F:endonuclease activity"/>
    <property type="evidence" value="ECO:0007669"/>
    <property type="project" value="InterPro"/>
</dbReference>
<dbReference type="GO" id="GO:0006265">
    <property type="term" value="P:DNA topological change"/>
    <property type="evidence" value="ECO:0007669"/>
    <property type="project" value="InterPro"/>
</dbReference>
<dbReference type="GO" id="GO:0016539">
    <property type="term" value="P:intein-mediated protein splicing"/>
    <property type="evidence" value="ECO:0007669"/>
    <property type="project" value="InterPro"/>
</dbReference>
<dbReference type="CDD" id="cd00081">
    <property type="entry name" value="Hint"/>
    <property type="match status" value="1"/>
</dbReference>
<dbReference type="CDD" id="cd00187">
    <property type="entry name" value="TOP4c"/>
    <property type="match status" value="1"/>
</dbReference>
<dbReference type="FunFam" id="1.10.268.10:FF:000001">
    <property type="entry name" value="DNA gyrase subunit A"/>
    <property type="match status" value="1"/>
</dbReference>
<dbReference type="FunFam" id="2.120.10.90:FF:000001">
    <property type="entry name" value="DNA gyrase subunit A"/>
    <property type="match status" value="1"/>
</dbReference>
<dbReference type="FunFam" id="3.90.199.10:FF:000010">
    <property type="entry name" value="DNA gyrase subunit A"/>
    <property type="match status" value="1"/>
</dbReference>
<dbReference type="FunFam" id="3.30.1360.40:FF:000008">
    <property type="entry name" value="DNA topoisomerase (ATP-hydrolyzing)"/>
    <property type="match status" value="1"/>
</dbReference>
<dbReference type="Gene3D" id="3.30.1360.40">
    <property type="match status" value="1"/>
</dbReference>
<dbReference type="Gene3D" id="2.120.10.90">
    <property type="entry name" value="DNA gyrase/topoisomerase IV, subunit A, C-terminal"/>
    <property type="match status" value="1"/>
</dbReference>
<dbReference type="Gene3D" id="2.170.16.10">
    <property type="entry name" value="Hedgehog/Intein (Hint) domain"/>
    <property type="match status" value="2"/>
</dbReference>
<dbReference type="Gene3D" id="3.10.28.10">
    <property type="entry name" value="Homing endonucleases"/>
    <property type="match status" value="1"/>
</dbReference>
<dbReference type="Gene3D" id="3.90.199.10">
    <property type="entry name" value="Topoisomerase II, domain 5"/>
    <property type="match status" value="2"/>
</dbReference>
<dbReference type="Gene3D" id="1.10.268.10">
    <property type="entry name" value="Topoisomerase, domain 3"/>
    <property type="match status" value="1"/>
</dbReference>
<dbReference type="InterPro" id="IPR006691">
    <property type="entry name" value="GyrA/parC_rep"/>
</dbReference>
<dbReference type="InterPro" id="IPR035516">
    <property type="entry name" value="Gyrase/topoIV_suA_C"/>
</dbReference>
<dbReference type="InterPro" id="IPR003586">
    <property type="entry name" value="Hint_dom_C"/>
</dbReference>
<dbReference type="InterPro" id="IPR003587">
    <property type="entry name" value="Hint_dom_N"/>
</dbReference>
<dbReference type="InterPro" id="IPR036844">
    <property type="entry name" value="Hint_dom_sf"/>
</dbReference>
<dbReference type="InterPro" id="IPR027434">
    <property type="entry name" value="Homing_endonucl"/>
</dbReference>
<dbReference type="InterPro" id="IPR006142">
    <property type="entry name" value="INTEIN"/>
</dbReference>
<dbReference type="InterPro" id="IPR030934">
    <property type="entry name" value="Intein_C"/>
</dbReference>
<dbReference type="InterPro" id="IPR004042">
    <property type="entry name" value="Intein_endonuc_central"/>
</dbReference>
<dbReference type="InterPro" id="IPR006141">
    <property type="entry name" value="Intein_N"/>
</dbReference>
<dbReference type="InterPro" id="IPR004860">
    <property type="entry name" value="LAGLIDADG_dom"/>
</dbReference>
<dbReference type="InterPro" id="IPR013760">
    <property type="entry name" value="Topo_IIA-like_dom_sf"/>
</dbReference>
<dbReference type="InterPro" id="IPR013758">
    <property type="entry name" value="Topo_IIA_A/C_ab"/>
</dbReference>
<dbReference type="InterPro" id="IPR013757">
    <property type="entry name" value="Topo_IIA_A_a_sf"/>
</dbReference>
<dbReference type="InterPro" id="IPR002205">
    <property type="entry name" value="Topo_IIA_dom_A"/>
</dbReference>
<dbReference type="InterPro" id="IPR053555">
    <property type="entry name" value="Topoisomerase_II_GyrA/ParC"/>
</dbReference>
<dbReference type="InterPro" id="IPR050220">
    <property type="entry name" value="Type_II_DNA_Topoisomerases"/>
</dbReference>
<dbReference type="NCBIfam" id="TIGR01063">
    <property type="entry name" value="gyrA"/>
    <property type="match status" value="1"/>
</dbReference>
<dbReference type="NCBIfam" id="NF038098">
    <property type="entry name" value="GyrA_w_intein"/>
    <property type="match status" value="1"/>
</dbReference>
<dbReference type="NCBIfam" id="TIGR01443">
    <property type="entry name" value="intein_Cterm"/>
    <property type="match status" value="1"/>
</dbReference>
<dbReference type="NCBIfam" id="TIGR01445">
    <property type="entry name" value="intein_Nterm"/>
    <property type="match status" value="1"/>
</dbReference>
<dbReference type="NCBIfam" id="NF004043">
    <property type="entry name" value="PRK05560.1"/>
    <property type="match status" value="1"/>
</dbReference>
<dbReference type="PANTHER" id="PTHR43493:SF5">
    <property type="entry name" value="DNA GYRASE SUBUNIT A, CHLOROPLASTIC_MITOCHONDRIAL"/>
    <property type="match status" value="1"/>
</dbReference>
<dbReference type="PANTHER" id="PTHR43493">
    <property type="entry name" value="DNA GYRASE/TOPOISOMERASE SUBUNIT A"/>
    <property type="match status" value="1"/>
</dbReference>
<dbReference type="Pfam" id="PF03989">
    <property type="entry name" value="DNA_gyraseA_C"/>
    <property type="match status" value="6"/>
</dbReference>
<dbReference type="Pfam" id="PF00521">
    <property type="entry name" value="DNA_topoisoIV"/>
    <property type="match status" value="2"/>
</dbReference>
<dbReference type="Pfam" id="PF14528">
    <property type="entry name" value="LAGLIDADG_3"/>
    <property type="match status" value="1"/>
</dbReference>
<dbReference type="PRINTS" id="PR00379">
    <property type="entry name" value="INTEIN"/>
</dbReference>
<dbReference type="SMART" id="SM00305">
    <property type="entry name" value="HintC"/>
    <property type="match status" value="1"/>
</dbReference>
<dbReference type="SMART" id="SM00306">
    <property type="entry name" value="HintN"/>
    <property type="match status" value="1"/>
</dbReference>
<dbReference type="SMART" id="SM00434">
    <property type="entry name" value="TOP4c"/>
    <property type="match status" value="1"/>
</dbReference>
<dbReference type="SUPFAM" id="SSF101904">
    <property type="entry name" value="GyrA/ParC C-terminal domain-like"/>
    <property type="match status" value="1"/>
</dbReference>
<dbReference type="SUPFAM" id="SSF51294">
    <property type="entry name" value="Hedgehog/intein (Hint) domain"/>
    <property type="match status" value="1"/>
</dbReference>
<dbReference type="SUPFAM" id="SSF55608">
    <property type="entry name" value="Homing endonucleases"/>
    <property type="match status" value="1"/>
</dbReference>
<dbReference type="SUPFAM" id="SSF56719">
    <property type="entry name" value="Type II DNA topoisomerase"/>
    <property type="match status" value="2"/>
</dbReference>
<dbReference type="PROSITE" id="PS50818">
    <property type="entry name" value="INTEIN_C_TER"/>
    <property type="match status" value="1"/>
</dbReference>
<dbReference type="PROSITE" id="PS50819">
    <property type="entry name" value="INTEIN_ENDONUCLEASE"/>
    <property type="match status" value="1"/>
</dbReference>
<dbReference type="PROSITE" id="PS50817">
    <property type="entry name" value="INTEIN_N_TER"/>
    <property type="match status" value="1"/>
</dbReference>
<dbReference type="PROSITE" id="PS52040">
    <property type="entry name" value="TOPO_IIA"/>
    <property type="match status" value="1"/>
</dbReference>
<sequence length="1273" mass="141218">MTDITLPPGDGSIQRVEPVDIQQEMQRSYIDYAMSVIVGRALPEVRDGLKPVHRRVLYAMLDSGFRPDRSHAKSARSVAETMGNYHPHGDASIYDTLVRMAQPWSLRYPLVDGQGNFGSPGNDPPAAMRYCVSGNSLVRLLFGKSIRIGDIVTGAQFNSDNPIDLKVLDRHGNPVVADYLFHSGEHQTYTVRTTEGYEITGTSNHPLLCLVNVGGIPTLLWKLIGEIRSGDYVVLQRIPPVEFGPADWYSTMEALLFGAFISGGFVFQDHAGFNSLDRDYFTMVVNAYDTVVGGLRCISSRITVSGSTLLELDVYNLIEFKKTRLSGLCGQRSADKLVPDWLWHSPSTVKRAFLQALFEGEGFSSILSRNIIEISYSTLSERLAADVQQMLLEFGVVSERYCHTVNEYKVVIANRAQVEMFFTQVGFGVTKQAKLIRDVVSMSPCVGMDINCVPGLATFIRKHCDNRWVEEDSFNQHNVDCVQHWHHHSAEIVGHIADPDIRAIVTDLTDGRFYYARVASVTDTGIQPVFSLHVDTEDHSFLTNGFISHNTEARLTPLAMEMLREIDEETVDFISNYDGRVQEPMVLPSRFPNLLANGSGGIAVGMATNIPPHNLYELADAVFWCLENHDADEETMLVAVMERVKGPDFPTAGLIVGSQGIADAYKTGRGSIRIRGVVEVEEDSRGRTSLVITELPYQVNHDNFITSIAEQVRTGRLAGISNVEDQGSDRVGVRIVIEIKRDAVAKVVLNNLYKHTQLQTSFGANMLSIVDGVPRTLRLDQMICYYVEHQLDVIVRRTTYRLRKANERAHILRGLVKALDALDEVITLIRASQTVDIARVGVVELLDIDDIQAQAILDMQLRRLAALERQRIIDDLAKIEVEIADLGDILAKPERRRGIIRNELTEIAEKYGDDRRTRIIAVDGDVNDEDLIAREEVVVTITETGYAKRTKTDLYRSQKRGGKGVQGAGLKQDDIVRHFFVCSTHDWILFFTTQGRVYRAKAYELPEASRTARGQHVANLLAFQPEERIAQVIQIRSYEDAPYLVLATRAGLVKKSKLTDFDSNRSGGIVAINLRDNDELVGAVLCAADGDLLLVSANGQSIRFSATDEALRPMGRATSGVQGMRFNADDRLLSLNVVREDTYLLVATSGGYAKRTSIEEYPMQGRGGKGVLTVMYDRRRGSLVGAIVVDEDSELYAITSGGGVIRTTARQVRQAGRQTKGVRLMNLGEGDTLLAIARNAEESADGVSVKVMISRSRVLSFFGSDSNTSPDRT</sequence>
<gene>
    <name evidence="2" type="primary">gyrA</name>
    <name type="ordered locus">ML0006</name>
</gene>
<accession>Q57532</accession>
<accession>Q50209</accession>
<accession>Q9CDF2</accession>
<protein>
    <recommendedName>
        <fullName evidence="2">DNA gyrase subunit A</fullName>
        <ecNumber evidence="2">5.6.2.2</ecNumber>
    </recommendedName>
    <component>
        <recommendedName>
            <fullName>Mle GyrA intein</fullName>
        </recommendedName>
    </component>
</protein>
<comment type="function">
    <text evidence="2 5">A type II topoisomerase that negatively supercoils closed circular double-stranded (ds) DNA in an ATP-dependent manner to modulate DNA topology and maintain chromosomes in an underwound state (PubMed:17325221). Negative supercoiling favors strand separation, and DNA replication, transcription, recombination and repair, all of which involve strand separation. Also able to catalyze the interconversion of other topological isomers of dsDNA rings, including catenanes and knotted rings. Type II topoisomerases break and join 2 DNA strands simultaneously in an ATP-dependent manner.</text>
</comment>
<comment type="catalytic activity">
    <reaction evidence="2">
        <text>ATP-dependent breakage, passage and rejoining of double-stranded DNA.</text>
        <dbReference type="EC" id="5.6.2.2"/>
    </reaction>
</comment>
<comment type="activity regulation">
    <text evidence="5">DNA supercoiling is inhibited by fluoroquinolones; IC(50) 1 ug/ml for sitafloxacin.</text>
</comment>
<comment type="subunit">
    <text evidence="2 5">Heterotetramer, composed of two GyrA and two GyrB chains (PubMed:17325221). In the heterotetramer, GyrA contains the active site tyrosine that forms a transient covalent intermediate with the DNA, while GyrB binds cofactors catalyzes ATP hydrolysis.</text>
</comment>
<comment type="subcellular location">
    <subcellularLocation>
        <location evidence="2">Cytoplasm</location>
    </subcellularLocation>
</comment>
<comment type="PTM">
    <text evidence="6">This protein undergoes a protein self splicing that involves a post-translational excision of the intervening region (intein) followed by peptide ligation.</text>
</comment>
<comment type="miscellaneous">
    <text evidence="2">Few gyrases are as efficient as E.coli at forming negative supercoils. Not all organisms have 2 type II topoisomerases; in organisms with a single type II topoisomerase this enzyme also has to decatenate newly replicated chromosomes.</text>
</comment>
<comment type="similarity">
    <text evidence="2">Belongs to the type II topoisomerase GyrA/ParC subunit family.</text>
</comment>
<comment type="sequence caution" evidence="6">
    <conflict type="frameshift">
        <sequence resource="EMBL-CDS" id="CAC29514"/>
    </conflict>
</comment>
<proteinExistence type="evidence at protein level"/>
<keyword id="KW-0067">ATP-binding</keyword>
<keyword id="KW-0068">Autocatalytic cleavage</keyword>
<keyword id="KW-0963">Cytoplasm</keyword>
<keyword id="KW-0238">DNA-binding</keyword>
<keyword id="KW-0413">Isomerase</keyword>
<keyword id="KW-0547">Nucleotide-binding</keyword>
<keyword id="KW-0651">Protein splicing</keyword>
<keyword id="KW-1185">Reference proteome</keyword>
<keyword id="KW-0799">Topoisomerase</keyword>